<organism>
    <name type="scientific">Saccharomyces cerevisiae (strain JAY291)</name>
    <name type="common">Baker's yeast</name>
    <dbReference type="NCBI Taxonomy" id="574961"/>
    <lineage>
        <taxon>Eukaryota</taxon>
        <taxon>Fungi</taxon>
        <taxon>Dikarya</taxon>
        <taxon>Ascomycota</taxon>
        <taxon>Saccharomycotina</taxon>
        <taxon>Saccharomycetes</taxon>
        <taxon>Saccharomycetales</taxon>
        <taxon>Saccharomycetaceae</taxon>
        <taxon>Saccharomyces</taxon>
    </lineage>
</organism>
<evidence type="ECO:0000250" key="1"/>
<evidence type="ECO:0000250" key="2">
    <source>
        <dbReference type="UniProtKB" id="Q12481"/>
    </source>
</evidence>
<evidence type="ECO:0000255" key="3"/>
<evidence type="ECO:0000256" key="4">
    <source>
        <dbReference type="SAM" id="MobiDB-lite"/>
    </source>
</evidence>
<evidence type="ECO:0000305" key="5"/>
<accession>C7GWA5</accession>
<keyword id="KW-0175">Coiled coil</keyword>
<keyword id="KW-0539">Nucleus</keyword>
<keyword id="KW-0597">Phosphoprotein</keyword>
<keyword id="KW-0687">Ribonucleoprotein</keyword>
<keyword id="KW-0690">Ribosome biogenesis</keyword>
<keyword id="KW-0698">rRNA processing</keyword>
<name>RRP36_YEAS2</name>
<reference key="1">
    <citation type="journal article" date="2009" name="Genome Res.">
        <title>Genome structure of a Saccharomyces cerevisiae strain widely used in bioethanol production.</title>
        <authorList>
            <person name="Argueso J.L."/>
            <person name="Carazzolle M.F."/>
            <person name="Mieczkowski P.A."/>
            <person name="Duarte F.M."/>
            <person name="Netto O.V.C."/>
            <person name="Missawa S.K."/>
            <person name="Galzerani F."/>
            <person name="Costa G.G.L."/>
            <person name="Vidal R.O."/>
            <person name="Noronha M.F."/>
            <person name="Dominska M."/>
            <person name="Andrietta M.G.S."/>
            <person name="Andrietta S.R."/>
            <person name="Cunha A.F."/>
            <person name="Gomes L.H."/>
            <person name="Tavares F.C.A."/>
            <person name="Alcarde A.R."/>
            <person name="Dietrich F.S."/>
            <person name="McCusker J.H."/>
            <person name="Petes T.D."/>
            <person name="Pereira G.A.G."/>
        </authorList>
    </citation>
    <scope>NUCLEOTIDE SEQUENCE [LARGE SCALE GENOMIC DNA]</scope>
    <source>
        <strain>JAY291</strain>
    </source>
</reference>
<proteinExistence type="inferred from homology"/>
<sequence length="300" mass="36126">MSYYFKNLKPDLNSDVEEDDGNLLESIMANKSKREIDEQESSDDELKTLSFGSLKKAETIIDEEDFKDTKPVHKKPITTTYREESFDEDDDSEDKSDEDAGFFEEDSEDETHHGQKVPKKKSKHAPIEQSSKKRVPRVRNIPGLEIPRNKRSNLYQDIRFDKSTGKALDSSIIRKRYQFLDEYREKEIDELQKLLQDRKFLSKIDQGEREEMEQRLKSMKSRLQSMKNKDLEREILKEYENDMNKNNNTRYHLKKSEKRKVVQKWKFDHMKAKQREKVMERKRKKRLGKEFKQFEFHNRR</sequence>
<protein>
    <recommendedName>
        <fullName>rRNA biogenesis protein RRP36</fullName>
    </recommendedName>
    <alternativeName>
        <fullName>Ribosomal RNA-processing protein 36</fullName>
    </alternativeName>
</protein>
<dbReference type="EMBL" id="ACFL01000381">
    <property type="protein sequence ID" value="EEU04854.1"/>
    <property type="molecule type" value="Genomic_DNA"/>
</dbReference>
<dbReference type="SMR" id="C7GWA5"/>
<dbReference type="Proteomes" id="UP000008073">
    <property type="component" value="Unassembled WGS sequence"/>
</dbReference>
<dbReference type="GO" id="GO:0030686">
    <property type="term" value="C:90S preribosome"/>
    <property type="evidence" value="ECO:0007669"/>
    <property type="project" value="TreeGrafter"/>
</dbReference>
<dbReference type="GO" id="GO:0005730">
    <property type="term" value="C:nucleolus"/>
    <property type="evidence" value="ECO:0007669"/>
    <property type="project" value="UniProtKB-SubCell"/>
</dbReference>
<dbReference type="GO" id="GO:0000462">
    <property type="term" value="P:maturation of SSU-rRNA from tricistronic rRNA transcript (SSU-rRNA, 5.8S rRNA, LSU-rRNA)"/>
    <property type="evidence" value="ECO:0007669"/>
    <property type="project" value="TreeGrafter"/>
</dbReference>
<dbReference type="InterPro" id="IPR009292">
    <property type="entry name" value="RRP36"/>
</dbReference>
<dbReference type="PANTHER" id="PTHR21738">
    <property type="entry name" value="RIBOSOMAL RNA PROCESSING PROTEIN 36 HOMOLOG"/>
    <property type="match status" value="1"/>
</dbReference>
<dbReference type="PANTHER" id="PTHR21738:SF0">
    <property type="entry name" value="RIBOSOMAL RNA PROCESSING PROTEIN 36 HOMOLOG"/>
    <property type="match status" value="1"/>
</dbReference>
<dbReference type="Pfam" id="PF06102">
    <property type="entry name" value="RRP36"/>
    <property type="match status" value="1"/>
</dbReference>
<feature type="chain" id="PRO_0000397656" description="rRNA biogenesis protein RRP36">
    <location>
        <begin position="1"/>
        <end position="300"/>
    </location>
</feature>
<feature type="region of interest" description="Disordered" evidence="4">
    <location>
        <begin position="60"/>
        <end position="146"/>
    </location>
</feature>
<feature type="coiled-coil region" evidence="3">
    <location>
        <begin position="203"/>
        <end position="248"/>
    </location>
</feature>
<feature type="compositionally biased region" description="Acidic residues" evidence="4">
    <location>
        <begin position="85"/>
        <end position="109"/>
    </location>
</feature>
<feature type="compositionally biased region" description="Basic residues" evidence="4">
    <location>
        <begin position="114"/>
        <end position="124"/>
    </location>
</feature>
<feature type="modified residue" description="Phosphoserine" evidence="2">
    <location>
        <position position="14"/>
    </location>
</feature>
<feature type="modified residue" description="Phosphoserine" evidence="2">
    <location>
        <position position="41"/>
    </location>
</feature>
<feature type="modified residue" description="Phosphoserine" evidence="2">
    <location>
        <position position="42"/>
    </location>
</feature>
<comment type="function">
    <text evidence="1">Component of the 90S pre-ribosome involved in the maturation of rRNAs. Required for early cleavages of the pre-RNAs in the 40S ribosomal subunit maturation pathway (By similarity).</text>
</comment>
<comment type="subunit">
    <text evidence="1">Associates with 90S and pre-40S pre-ribosomal particles. Interacts with CKA1, CKA2, CKB1, CKB2, PWP2, UTP15, UTP17 and UTP22 (By similarity).</text>
</comment>
<comment type="subcellular location">
    <subcellularLocation>
        <location evidence="1">Nucleus</location>
        <location evidence="1">Nucleolus</location>
    </subcellularLocation>
</comment>
<comment type="similarity">
    <text evidence="5">Belongs to the RRP36 family.</text>
</comment>
<gene>
    <name type="primary">RRP36</name>
    <name type="ORF">C1Q_04802</name>
</gene>